<keyword id="KW-0687">Ribonucleoprotein</keyword>
<keyword id="KW-0689">Ribosomal protein</keyword>
<keyword id="KW-0694">RNA-binding</keyword>
<keyword id="KW-0699">rRNA-binding</keyword>
<keyword id="KW-0820">tRNA-binding</keyword>
<evidence type="ECO:0000255" key="1">
    <source>
        <dbReference type="HAMAP-Rule" id="MF_01333"/>
    </source>
</evidence>
<evidence type="ECO:0000305" key="2"/>
<dbReference type="EMBL" id="CP000614">
    <property type="protein sequence ID" value="ABO53355.1"/>
    <property type="molecule type" value="Genomic_DNA"/>
</dbReference>
<dbReference type="SMR" id="A4JAQ2"/>
<dbReference type="KEGG" id="bvi:Bcep1808_0342"/>
<dbReference type="eggNOG" id="COG0094">
    <property type="taxonomic scope" value="Bacteria"/>
</dbReference>
<dbReference type="HOGENOM" id="CLU_061015_2_1_4"/>
<dbReference type="Proteomes" id="UP000002287">
    <property type="component" value="Chromosome 1"/>
</dbReference>
<dbReference type="GO" id="GO:1990904">
    <property type="term" value="C:ribonucleoprotein complex"/>
    <property type="evidence" value="ECO:0007669"/>
    <property type="project" value="UniProtKB-KW"/>
</dbReference>
<dbReference type="GO" id="GO:0005840">
    <property type="term" value="C:ribosome"/>
    <property type="evidence" value="ECO:0007669"/>
    <property type="project" value="UniProtKB-KW"/>
</dbReference>
<dbReference type="GO" id="GO:0019843">
    <property type="term" value="F:rRNA binding"/>
    <property type="evidence" value="ECO:0007669"/>
    <property type="project" value="UniProtKB-UniRule"/>
</dbReference>
<dbReference type="GO" id="GO:0003735">
    <property type="term" value="F:structural constituent of ribosome"/>
    <property type="evidence" value="ECO:0007669"/>
    <property type="project" value="InterPro"/>
</dbReference>
<dbReference type="GO" id="GO:0000049">
    <property type="term" value="F:tRNA binding"/>
    <property type="evidence" value="ECO:0007669"/>
    <property type="project" value="UniProtKB-UniRule"/>
</dbReference>
<dbReference type="GO" id="GO:0006412">
    <property type="term" value="P:translation"/>
    <property type="evidence" value="ECO:0007669"/>
    <property type="project" value="UniProtKB-UniRule"/>
</dbReference>
<dbReference type="FunFam" id="3.30.1440.10:FF:000001">
    <property type="entry name" value="50S ribosomal protein L5"/>
    <property type="match status" value="1"/>
</dbReference>
<dbReference type="Gene3D" id="3.30.1440.10">
    <property type="match status" value="1"/>
</dbReference>
<dbReference type="HAMAP" id="MF_01333_B">
    <property type="entry name" value="Ribosomal_uL5_B"/>
    <property type="match status" value="1"/>
</dbReference>
<dbReference type="InterPro" id="IPR002132">
    <property type="entry name" value="Ribosomal_uL5"/>
</dbReference>
<dbReference type="InterPro" id="IPR020930">
    <property type="entry name" value="Ribosomal_uL5_bac-type"/>
</dbReference>
<dbReference type="InterPro" id="IPR031309">
    <property type="entry name" value="Ribosomal_uL5_C"/>
</dbReference>
<dbReference type="InterPro" id="IPR020929">
    <property type="entry name" value="Ribosomal_uL5_CS"/>
</dbReference>
<dbReference type="InterPro" id="IPR022803">
    <property type="entry name" value="Ribosomal_uL5_dom_sf"/>
</dbReference>
<dbReference type="InterPro" id="IPR031310">
    <property type="entry name" value="Ribosomal_uL5_N"/>
</dbReference>
<dbReference type="NCBIfam" id="NF000585">
    <property type="entry name" value="PRK00010.1"/>
    <property type="match status" value="1"/>
</dbReference>
<dbReference type="PANTHER" id="PTHR11994">
    <property type="entry name" value="60S RIBOSOMAL PROTEIN L11-RELATED"/>
    <property type="match status" value="1"/>
</dbReference>
<dbReference type="Pfam" id="PF00281">
    <property type="entry name" value="Ribosomal_L5"/>
    <property type="match status" value="1"/>
</dbReference>
<dbReference type="Pfam" id="PF00673">
    <property type="entry name" value="Ribosomal_L5_C"/>
    <property type="match status" value="1"/>
</dbReference>
<dbReference type="PIRSF" id="PIRSF002161">
    <property type="entry name" value="Ribosomal_L5"/>
    <property type="match status" value="1"/>
</dbReference>
<dbReference type="SUPFAM" id="SSF55282">
    <property type="entry name" value="RL5-like"/>
    <property type="match status" value="1"/>
</dbReference>
<dbReference type="PROSITE" id="PS00358">
    <property type="entry name" value="RIBOSOMAL_L5"/>
    <property type="match status" value="1"/>
</dbReference>
<comment type="function">
    <text evidence="1">This is one of the proteins that bind and probably mediate the attachment of the 5S RNA into the large ribosomal subunit, where it forms part of the central protuberance. In the 70S ribosome it contacts protein S13 of the 30S subunit (bridge B1b), connecting the 2 subunits; this bridge is implicated in subunit movement. Contacts the P site tRNA; the 5S rRNA and some of its associated proteins might help stabilize positioning of ribosome-bound tRNAs.</text>
</comment>
<comment type="subunit">
    <text evidence="1">Part of the 50S ribosomal subunit; part of the 5S rRNA/L5/L18/L25 subcomplex. Contacts the 5S rRNA and the P site tRNA. Forms a bridge to the 30S subunit in the 70S ribosome.</text>
</comment>
<comment type="similarity">
    <text evidence="1">Belongs to the universal ribosomal protein uL5 family.</text>
</comment>
<protein>
    <recommendedName>
        <fullName evidence="1">Large ribosomal subunit protein uL5</fullName>
    </recommendedName>
    <alternativeName>
        <fullName evidence="2">50S ribosomal protein L5</fullName>
    </alternativeName>
</protein>
<reference key="1">
    <citation type="submission" date="2007-03" db="EMBL/GenBank/DDBJ databases">
        <title>Complete sequence of chromosome 1 of Burkholderia vietnamiensis G4.</title>
        <authorList>
            <consortium name="US DOE Joint Genome Institute"/>
            <person name="Copeland A."/>
            <person name="Lucas S."/>
            <person name="Lapidus A."/>
            <person name="Barry K."/>
            <person name="Detter J.C."/>
            <person name="Glavina del Rio T."/>
            <person name="Hammon N."/>
            <person name="Israni S."/>
            <person name="Dalin E."/>
            <person name="Tice H."/>
            <person name="Pitluck S."/>
            <person name="Chain P."/>
            <person name="Malfatti S."/>
            <person name="Shin M."/>
            <person name="Vergez L."/>
            <person name="Schmutz J."/>
            <person name="Larimer F."/>
            <person name="Land M."/>
            <person name="Hauser L."/>
            <person name="Kyrpides N."/>
            <person name="Tiedje J."/>
            <person name="Richardson P."/>
        </authorList>
    </citation>
    <scope>NUCLEOTIDE SEQUENCE [LARGE SCALE GENOMIC DNA]</scope>
    <source>
        <strain>G4 / LMG 22486</strain>
    </source>
</reference>
<feature type="chain" id="PRO_1000052709" description="Large ribosomal subunit protein uL5">
    <location>
        <begin position="1"/>
        <end position="179"/>
    </location>
</feature>
<name>RL5_BURVG</name>
<accession>A4JAQ2</accession>
<organism>
    <name type="scientific">Burkholderia vietnamiensis (strain G4 / LMG 22486)</name>
    <name type="common">Burkholderia cepacia (strain R1808)</name>
    <dbReference type="NCBI Taxonomy" id="269482"/>
    <lineage>
        <taxon>Bacteria</taxon>
        <taxon>Pseudomonadati</taxon>
        <taxon>Pseudomonadota</taxon>
        <taxon>Betaproteobacteria</taxon>
        <taxon>Burkholderiales</taxon>
        <taxon>Burkholderiaceae</taxon>
        <taxon>Burkholderia</taxon>
        <taxon>Burkholderia cepacia complex</taxon>
    </lineage>
</organism>
<gene>
    <name evidence="1" type="primary">rplE</name>
    <name type="ordered locus">Bcep1808_0342</name>
</gene>
<proteinExistence type="inferred from homology"/>
<sequence>MARFQEFYKEKVVPGLIEKFGYKSVMEVPRITKITLNMGLGEAIADKKVIENAVGDLTKIAGQKPVVTKARKAIAGFKIRQGYPIGAMVTLRGRAMYEFLDRFVTVALPRVRDFRGVSGRAFDGRGNYNIGVKEQIIFPEIDYDKIDALRGLNISITTTAKTDDEAKALLASFKFPFRN</sequence>